<feature type="initiator methionine" description="Removed" evidence="2">
    <location>
        <position position="1"/>
    </location>
</feature>
<feature type="chain" id="PRO_0000079300" description="Vacuolar ATPase assembly protein VMA12">
    <location>
        <begin position="2"/>
        <end position="208"/>
    </location>
</feature>
<feature type="transmembrane region" description="Helical" evidence="3">
    <location>
        <begin position="146"/>
        <end position="166"/>
    </location>
</feature>
<feature type="transmembrane region" description="Helical" evidence="3">
    <location>
        <begin position="178"/>
        <end position="198"/>
    </location>
</feature>
<feature type="modified residue" description="N-acetylalanine" evidence="2">
    <location>
        <position position="2"/>
    </location>
</feature>
<reference key="1">
    <citation type="submission" date="2004-11" db="EMBL/GenBank/DDBJ databases">
        <authorList>
            <consortium name="The German cDNA consortium"/>
        </authorList>
    </citation>
    <scope>NUCLEOTIDE SEQUENCE [LARGE SCALE MRNA]</scope>
    <source>
        <tissue>Kidney</tissue>
    </source>
</reference>
<comment type="function">
    <text evidence="1 2">In aerobic conditions, required for intracellular iron homeostasis, thus triggering the activity of Fe(2+) prolyl hydroxylase (PHD) enzymes, and leading to HIF1A hydroxylation and subsequent proteasomal degradation. Necessary for endolysosomal acidification and lysosomal degradation (By similarity). May be involved in Golgi homeostasis (By similarity). Binds 20(S)-hydroxycholesterol (20(S)-OHC) (By similarity).</text>
</comment>
<comment type="subunit">
    <text evidence="2">Accessory component of the multisubunit proton-transporting vacuolar (V)-ATPase protein pump.</text>
</comment>
<comment type="subcellular location">
    <subcellularLocation>
        <location evidence="2">Cytoplasmic vesicle</location>
        <location evidence="2">COPI-coated vesicle membrane</location>
        <topology evidence="3">Multi-pass membrane protein</topology>
    </subcellularLocation>
    <subcellularLocation>
        <location evidence="2">Endoplasmic reticulum-Golgi intermediate compartment membrane</location>
        <topology evidence="3">Multi-pass membrane protein</topology>
    </subcellularLocation>
    <subcellularLocation>
        <location evidence="2">Endoplasmic reticulum membrane</location>
        <topology evidence="3">Multi-pass membrane protein</topology>
    </subcellularLocation>
    <text evidence="2">Partial colocalization with GOLGB1.</text>
</comment>
<organism>
    <name type="scientific">Pongo abelii</name>
    <name type="common">Sumatran orangutan</name>
    <name type="synonym">Pongo pygmaeus abelii</name>
    <dbReference type="NCBI Taxonomy" id="9601"/>
    <lineage>
        <taxon>Eukaryota</taxon>
        <taxon>Metazoa</taxon>
        <taxon>Chordata</taxon>
        <taxon>Craniata</taxon>
        <taxon>Vertebrata</taxon>
        <taxon>Euteleostomi</taxon>
        <taxon>Mammalia</taxon>
        <taxon>Eutheria</taxon>
        <taxon>Euarchontoglires</taxon>
        <taxon>Primates</taxon>
        <taxon>Haplorrhini</taxon>
        <taxon>Catarrhini</taxon>
        <taxon>Hominidae</taxon>
        <taxon>Pongo</taxon>
    </lineage>
</organism>
<sequence>MASSLLAGERLVRALGPGGELEPELLPRKLRAELEAALGKKHTGGDSSSGPQRLVSFRLIRDLHQHLRERDSKLYLHELLEGSEIYLPEVVKPPRNPELVARLEKIKIQLANEEYKRITRNVTCQDTRHGGTLSDLGKQVRSLKALVITIFNFIVTVVAAFVCTYLGSQYIFTEMASRVLAALIVASVVGLAELYVMVRAMEGELGEL</sequence>
<proteinExistence type="evidence at transcript level"/>
<keyword id="KW-0007">Acetylation</keyword>
<keyword id="KW-0968">Cytoplasmic vesicle</keyword>
<keyword id="KW-0256">Endoplasmic reticulum</keyword>
<keyword id="KW-0472">Membrane</keyword>
<keyword id="KW-1185">Reference proteome</keyword>
<keyword id="KW-0812">Transmembrane</keyword>
<keyword id="KW-1133">Transmembrane helix</keyword>
<name>VMA12_PONAB</name>
<protein>
    <recommendedName>
        <fullName>Vacuolar ATPase assembly protein VMA12</fullName>
    </recommendedName>
    <alternativeName>
        <fullName>Transmembrane protein 199</fullName>
    </alternativeName>
</protein>
<gene>
    <name type="primary">VMA12</name>
    <name type="synonym">TMEM199</name>
</gene>
<dbReference type="EMBL" id="CR858934">
    <property type="protein sequence ID" value="CAH91132.1"/>
    <property type="molecule type" value="mRNA"/>
</dbReference>
<dbReference type="RefSeq" id="NP_001125662.1">
    <property type="nucleotide sequence ID" value="NM_001132190.1"/>
</dbReference>
<dbReference type="SMR" id="Q5RAS8"/>
<dbReference type="FunCoup" id="Q5RAS8">
    <property type="interactions" value="2481"/>
</dbReference>
<dbReference type="STRING" id="9601.ENSPPYP00000009097"/>
<dbReference type="Ensembl" id="ENSPPYT00000009467.2">
    <property type="protein sequence ID" value="ENSPPYP00000009097.1"/>
    <property type="gene ID" value="ENSPPYG00000008090.2"/>
</dbReference>
<dbReference type="GeneID" id="100172582"/>
<dbReference type="KEGG" id="pon:100172582"/>
<dbReference type="CTD" id="147007"/>
<dbReference type="eggNOG" id="ENOG502RXKD">
    <property type="taxonomic scope" value="Eukaryota"/>
</dbReference>
<dbReference type="GeneTree" id="ENSGT00390000014591"/>
<dbReference type="HOGENOM" id="CLU_114590_0_0_1"/>
<dbReference type="InParanoid" id="Q5RAS8"/>
<dbReference type="OMA" id="RMTRNVN"/>
<dbReference type="OrthoDB" id="19981at2759"/>
<dbReference type="TreeFam" id="TF314610"/>
<dbReference type="Proteomes" id="UP000001595">
    <property type="component" value="Chromosome 17"/>
</dbReference>
<dbReference type="GO" id="GO:0030663">
    <property type="term" value="C:COPI-coated vesicle membrane"/>
    <property type="evidence" value="ECO:0000250"/>
    <property type="project" value="UniProtKB"/>
</dbReference>
<dbReference type="GO" id="GO:0005783">
    <property type="term" value="C:endoplasmic reticulum"/>
    <property type="evidence" value="ECO:0000250"/>
    <property type="project" value="UniProtKB"/>
</dbReference>
<dbReference type="GO" id="GO:0005789">
    <property type="term" value="C:endoplasmic reticulum membrane"/>
    <property type="evidence" value="ECO:0007669"/>
    <property type="project" value="UniProtKB-SubCell"/>
</dbReference>
<dbReference type="GO" id="GO:0033116">
    <property type="term" value="C:endoplasmic reticulum-Golgi intermediate compartment membrane"/>
    <property type="evidence" value="ECO:0000250"/>
    <property type="project" value="UniProtKB"/>
</dbReference>
<dbReference type="GO" id="GO:0005764">
    <property type="term" value="C:lysosome"/>
    <property type="evidence" value="ECO:0007669"/>
    <property type="project" value="GOC"/>
</dbReference>
<dbReference type="GO" id="GO:0016471">
    <property type="term" value="C:vacuolar proton-transporting V-type ATPase complex"/>
    <property type="evidence" value="ECO:0000250"/>
    <property type="project" value="UniProtKB"/>
</dbReference>
<dbReference type="GO" id="GO:0008142">
    <property type="term" value="F:oxysterol binding"/>
    <property type="evidence" value="ECO:0000250"/>
    <property type="project" value="UniProtKB"/>
</dbReference>
<dbReference type="GO" id="GO:0036295">
    <property type="term" value="P:cellular response to increased oxygen levels"/>
    <property type="evidence" value="ECO:0000250"/>
    <property type="project" value="UniProtKB"/>
</dbReference>
<dbReference type="GO" id="GO:0006879">
    <property type="term" value="P:intracellular iron ion homeostasis"/>
    <property type="evidence" value="ECO:0000250"/>
    <property type="project" value="UniProtKB"/>
</dbReference>
<dbReference type="GO" id="GO:0007042">
    <property type="term" value="P:lysosomal lumen acidification"/>
    <property type="evidence" value="ECO:0000250"/>
    <property type="project" value="UniProtKB"/>
</dbReference>
<dbReference type="GO" id="GO:1905146">
    <property type="term" value="P:lysosomal protein catabolic process"/>
    <property type="evidence" value="ECO:0000250"/>
    <property type="project" value="UniProtKB"/>
</dbReference>
<dbReference type="GO" id="GO:0070072">
    <property type="term" value="P:vacuolar proton-transporting V-type ATPase complex assembly"/>
    <property type="evidence" value="ECO:0007669"/>
    <property type="project" value="InterPro"/>
</dbReference>
<dbReference type="InterPro" id="IPR021013">
    <property type="entry name" value="ATPase_Vma12"/>
</dbReference>
<dbReference type="PANTHER" id="PTHR31394">
    <property type="entry name" value="TRANSMEMBRANE PROTEIN 199"/>
    <property type="match status" value="1"/>
</dbReference>
<dbReference type="PANTHER" id="PTHR31394:SF1">
    <property type="entry name" value="TRANSMEMBRANE PROTEIN 199"/>
    <property type="match status" value="1"/>
</dbReference>
<dbReference type="Pfam" id="PF11712">
    <property type="entry name" value="Vma12"/>
    <property type="match status" value="1"/>
</dbReference>
<accession>Q5RAS8</accession>
<evidence type="ECO:0000250" key="1">
    <source>
        <dbReference type="UniProtKB" id="Q5SYH2"/>
    </source>
</evidence>
<evidence type="ECO:0000250" key="2">
    <source>
        <dbReference type="UniProtKB" id="Q8N511"/>
    </source>
</evidence>
<evidence type="ECO:0000255" key="3"/>